<reference key="1">
    <citation type="journal article" date="2009" name="Infect. Immun.">
        <title>Comparative genomics reveal extensive transposon-mediated genomic plasticity and diversity among potential effector proteins within the genus Coxiella.</title>
        <authorList>
            <person name="Beare P.A."/>
            <person name="Unsworth N."/>
            <person name="Andoh M."/>
            <person name="Voth D.E."/>
            <person name="Omsland A."/>
            <person name="Gilk S.D."/>
            <person name="Williams K.P."/>
            <person name="Sobral B.W."/>
            <person name="Kupko J.J. III"/>
            <person name="Porcella S.F."/>
            <person name="Samuel J.E."/>
            <person name="Heinzen R.A."/>
        </authorList>
    </citation>
    <scope>NUCLEOTIDE SEQUENCE [LARGE SCALE GENOMIC DNA]</scope>
    <source>
        <strain>CbuG_Q212</strain>
    </source>
</reference>
<feature type="chain" id="PRO_0000368443" description="ATP synthase subunit b">
    <location>
        <begin position="1"/>
        <end position="156"/>
    </location>
</feature>
<feature type="transmembrane region" description="Helical" evidence="1">
    <location>
        <begin position="7"/>
        <end position="27"/>
    </location>
</feature>
<keyword id="KW-0066">ATP synthesis</keyword>
<keyword id="KW-0997">Cell inner membrane</keyword>
<keyword id="KW-1003">Cell membrane</keyword>
<keyword id="KW-0138">CF(0)</keyword>
<keyword id="KW-0375">Hydrogen ion transport</keyword>
<keyword id="KW-0406">Ion transport</keyword>
<keyword id="KW-0472">Membrane</keyword>
<keyword id="KW-0812">Transmembrane</keyword>
<keyword id="KW-1133">Transmembrane helix</keyword>
<keyword id="KW-0813">Transport</keyword>
<sequence length="156" mass="17410">MDINASLIVQMLVFVVFIGLTMKFIWPPLTKALEARRKNIADGLAAAEEGRKELELAEIKSKEQLTEAKTQAAHIIEQANQRANHIVEEAKNKAREEGAHLIQLAKNEIEQEYNAAKTELLKQISTIAVAGAQKILQREVDKASNDRLVDELVSEI</sequence>
<organism>
    <name type="scientific">Coxiella burnetii (strain CbuG_Q212)</name>
    <name type="common">Coxiella burnetii (strain Q212)</name>
    <dbReference type="NCBI Taxonomy" id="434923"/>
    <lineage>
        <taxon>Bacteria</taxon>
        <taxon>Pseudomonadati</taxon>
        <taxon>Pseudomonadota</taxon>
        <taxon>Gammaproteobacteria</taxon>
        <taxon>Legionellales</taxon>
        <taxon>Coxiellaceae</taxon>
        <taxon>Coxiella</taxon>
    </lineage>
</organism>
<accession>B6J2D6</accession>
<proteinExistence type="inferred from homology"/>
<comment type="function">
    <text evidence="1">F(1)F(0) ATP synthase produces ATP from ADP in the presence of a proton or sodium gradient. F-type ATPases consist of two structural domains, F(1) containing the extramembraneous catalytic core and F(0) containing the membrane proton channel, linked together by a central stalk and a peripheral stalk. During catalysis, ATP synthesis in the catalytic domain of F(1) is coupled via a rotary mechanism of the central stalk subunits to proton translocation.</text>
</comment>
<comment type="function">
    <text evidence="1">Component of the F(0) channel, it forms part of the peripheral stalk, linking F(1) to F(0).</text>
</comment>
<comment type="subunit">
    <text evidence="1">F-type ATPases have 2 components, F(1) - the catalytic core - and F(0) - the membrane proton channel. F(1) has five subunits: alpha(3), beta(3), gamma(1), delta(1), epsilon(1). F(0) has three main subunits: a(1), b(2) and c(10-14). The alpha and beta chains form an alternating ring which encloses part of the gamma chain. F(1) is attached to F(0) by a central stalk formed by the gamma and epsilon chains, while a peripheral stalk is formed by the delta and b chains.</text>
</comment>
<comment type="subcellular location">
    <subcellularLocation>
        <location evidence="1">Cell inner membrane</location>
        <topology evidence="1">Single-pass membrane protein</topology>
    </subcellularLocation>
</comment>
<comment type="similarity">
    <text evidence="1">Belongs to the ATPase B chain family.</text>
</comment>
<gene>
    <name evidence="1" type="primary">atpF</name>
    <name type="ordered locus">CbuG_0052</name>
</gene>
<evidence type="ECO:0000255" key="1">
    <source>
        <dbReference type="HAMAP-Rule" id="MF_01398"/>
    </source>
</evidence>
<name>ATPF_COXB2</name>
<protein>
    <recommendedName>
        <fullName evidence="1">ATP synthase subunit b</fullName>
    </recommendedName>
    <alternativeName>
        <fullName evidence="1">ATP synthase F(0) sector subunit b</fullName>
    </alternativeName>
    <alternativeName>
        <fullName evidence="1">ATPase subunit I</fullName>
    </alternativeName>
    <alternativeName>
        <fullName evidence="1">F-type ATPase subunit b</fullName>
        <shortName evidence="1">F-ATPase subunit b</shortName>
    </alternativeName>
</protein>
<dbReference type="EMBL" id="CP001019">
    <property type="protein sequence ID" value="ACJ17510.1"/>
    <property type="molecule type" value="Genomic_DNA"/>
</dbReference>
<dbReference type="RefSeq" id="WP_005770032.1">
    <property type="nucleotide sequence ID" value="NC_011527.1"/>
</dbReference>
<dbReference type="SMR" id="B6J2D6"/>
<dbReference type="KEGG" id="cbg:CbuG_0052"/>
<dbReference type="HOGENOM" id="CLU_079215_4_5_6"/>
<dbReference type="GO" id="GO:0005886">
    <property type="term" value="C:plasma membrane"/>
    <property type="evidence" value="ECO:0007669"/>
    <property type="project" value="UniProtKB-SubCell"/>
</dbReference>
<dbReference type="GO" id="GO:0045259">
    <property type="term" value="C:proton-transporting ATP synthase complex"/>
    <property type="evidence" value="ECO:0007669"/>
    <property type="project" value="UniProtKB-KW"/>
</dbReference>
<dbReference type="GO" id="GO:0046933">
    <property type="term" value="F:proton-transporting ATP synthase activity, rotational mechanism"/>
    <property type="evidence" value="ECO:0007669"/>
    <property type="project" value="UniProtKB-UniRule"/>
</dbReference>
<dbReference type="GO" id="GO:0046961">
    <property type="term" value="F:proton-transporting ATPase activity, rotational mechanism"/>
    <property type="evidence" value="ECO:0007669"/>
    <property type="project" value="TreeGrafter"/>
</dbReference>
<dbReference type="CDD" id="cd06503">
    <property type="entry name" value="ATP-synt_Fo_b"/>
    <property type="match status" value="1"/>
</dbReference>
<dbReference type="FunFam" id="1.20.5.620:FF:000001">
    <property type="entry name" value="ATP synthase subunit b"/>
    <property type="match status" value="1"/>
</dbReference>
<dbReference type="Gene3D" id="1.20.5.620">
    <property type="entry name" value="F1F0 ATP synthase subunit B, membrane domain"/>
    <property type="match status" value="1"/>
</dbReference>
<dbReference type="HAMAP" id="MF_01398">
    <property type="entry name" value="ATP_synth_b_bprime"/>
    <property type="match status" value="1"/>
</dbReference>
<dbReference type="InterPro" id="IPR028987">
    <property type="entry name" value="ATP_synth_B-like_membr_sf"/>
</dbReference>
<dbReference type="InterPro" id="IPR002146">
    <property type="entry name" value="ATP_synth_b/b'su_bac/chlpt"/>
</dbReference>
<dbReference type="InterPro" id="IPR005864">
    <property type="entry name" value="ATP_synth_F0_bsu_bac"/>
</dbReference>
<dbReference type="InterPro" id="IPR050059">
    <property type="entry name" value="ATP_synthase_B_chain"/>
</dbReference>
<dbReference type="NCBIfam" id="TIGR01144">
    <property type="entry name" value="ATP_synt_b"/>
    <property type="match status" value="1"/>
</dbReference>
<dbReference type="NCBIfam" id="NF004411">
    <property type="entry name" value="PRK05759.1-2"/>
    <property type="match status" value="1"/>
</dbReference>
<dbReference type="PANTHER" id="PTHR33445:SF1">
    <property type="entry name" value="ATP SYNTHASE SUBUNIT B"/>
    <property type="match status" value="1"/>
</dbReference>
<dbReference type="PANTHER" id="PTHR33445">
    <property type="entry name" value="ATP SYNTHASE SUBUNIT B', CHLOROPLASTIC"/>
    <property type="match status" value="1"/>
</dbReference>
<dbReference type="Pfam" id="PF00430">
    <property type="entry name" value="ATP-synt_B"/>
    <property type="match status" value="1"/>
</dbReference>
<dbReference type="SUPFAM" id="SSF81573">
    <property type="entry name" value="F1F0 ATP synthase subunit B, membrane domain"/>
    <property type="match status" value="1"/>
</dbReference>